<protein>
    <recommendedName>
        <fullName evidence="1">Diaminopimelate epimerase</fullName>
        <shortName evidence="1">DAP epimerase</shortName>
        <ecNumber evidence="1 2">5.1.1.7</ecNumber>
    </recommendedName>
    <alternativeName>
        <fullName evidence="3">Dpm epimerase</fullName>
    </alternativeName>
    <alternativeName>
        <fullName evidence="1">PLP-independent amino acid racemase</fullName>
    </alternativeName>
</protein>
<feature type="chain" id="PRO_0000448681" description="Diaminopimelate epimerase">
    <location>
        <begin position="1"/>
        <end position="236"/>
    </location>
</feature>
<feature type="active site" description="Proton donor" evidence="1">
    <location>
        <position position="64"/>
    </location>
</feature>
<feature type="active site" description="Proton acceptor" evidence="1">
    <location>
        <position position="186"/>
    </location>
</feature>
<feature type="binding site" evidence="1">
    <location>
        <position position="8"/>
    </location>
    <ligand>
        <name>substrate</name>
    </ligand>
</feature>
<feature type="binding site" evidence="1">
    <location>
        <position position="55"/>
    </location>
    <ligand>
        <name>substrate</name>
    </ligand>
</feature>
<feature type="binding site" evidence="1">
    <location>
        <begin position="65"/>
        <end position="66"/>
    </location>
    <ligand>
        <name>substrate</name>
    </ligand>
</feature>
<feature type="binding site" evidence="1">
    <location>
        <position position="159"/>
    </location>
    <ligand>
        <name>substrate</name>
    </ligand>
</feature>
<feature type="binding site" evidence="1">
    <location>
        <begin position="176"/>
        <end position="177"/>
    </location>
    <ligand>
        <name>substrate</name>
    </ligand>
</feature>
<feature type="binding site" evidence="1">
    <location>
        <begin position="187"/>
        <end position="188"/>
    </location>
    <ligand>
        <name>substrate</name>
    </ligand>
</feature>
<feature type="site" description="Could be important to modulate the pK values of the two catalytic cysteine residues" evidence="1">
    <location>
        <position position="132"/>
    </location>
</feature>
<feature type="site" description="Could be important to modulate the pK values of the two catalytic cysteine residues" evidence="1">
    <location>
        <position position="176"/>
    </location>
</feature>
<keyword id="KW-0028">Amino-acid biosynthesis</keyword>
<keyword id="KW-0963">Cytoplasm</keyword>
<keyword id="KW-0413">Isomerase</keyword>
<keyword id="KW-0457">Lysine biosynthesis</keyword>
<keyword id="KW-1185">Reference proteome</keyword>
<accession>Q9X1L0</accession>
<accession>G4FFQ9</accession>
<name>DAPF_THEMA</name>
<sequence>MCYSANGNTFLIVDNTQKRIPEEKKPDFVRENVGDLDGVIFVELVDGKYFMDYYNRDGSMAAFCGNGARAFSQYLIDRGWIKEKEFTFLSRAGEIKVIVDDSIWVRMPGVSEKKEMKVDGYEGYFVVVGVPHFVMEVKGIDELDVEKLGRDLRYKTGANVDFYEVLPDRLKVRTYERGVERETKACGTGVTSVFVVYRDKTGAKEVKIQVPGGTLFLKEENGEIFLRGDVKRCSEE</sequence>
<dbReference type="EC" id="5.1.1.7" evidence="1 2"/>
<dbReference type="EMBL" id="AE000512">
    <property type="protein sequence ID" value="AAD36589.1"/>
    <property type="molecule type" value="Genomic_DNA"/>
</dbReference>
<dbReference type="PIR" id="C72246">
    <property type="entry name" value="C72246"/>
</dbReference>
<dbReference type="RefSeq" id="NP_229322.1">
    <property type="nucleotide sequence ID" value="NC_000853.1"/>
</dbReference>
<dbReference type="RefSeq" id="WP_004081881.1">
    <property type="nucleotide sequence ID" value="NC_000853.1"/>
</dbReference>
<dbReference type="SMR" id="Q9X1L0"/>
<dbReference type="FunCoup" id="Q9X1L0">
    <property type="interactions" value="409"/>
</dbReference>
<dbReference type="STRING" id="243274.TM_1522"/>
<dbReference type="PaxDb" id="243274-THEMA_06690"/>
<dbReference type="DNASU" id="897985"/>
<dbReference type="EnsemblBacteria" id="AAD36589">
    <property type="protein sequence ID" value="AAD36589"/>
    <property type="gene ID" value="TM_1522"/>
</dbReference>
<dbReference type="KEGG" id="tma:TM1522"/>
<dbReference type="KEGG" id="tmi:THEMA_06690"/>
<dbReference type="KEGG" id="tmm:Tmari_1530"/>
<dbReference type="KEGG" id="tmw:THMA_1554"/>
<dbReference type="PATRIC" id="fig|243274.17.peg.1530"/>
<dbReference type="InParanoid" id="Q9X1L0"/>
<dbReference type="OrthoDB" id="9805408at2"/>
<dbReference type="SABIO-RK" id="Q9X1L0"/>
<dbReference type="UniPathway" id="UPA00034">
    <property type="reaction ID" value="UER00025"/>
</dbReference>
<dbReference type="Proteomes" id="UP000008183">
    <property type="component" value="Chromosome"/>
</dbReference>
<dbReference type="GO" id="GO:0005829">
    <property type="term" value="C:cytosol"/>
    <property type="evidence" value="ECO:0000318"/>
    <property type="project" value="GO_Central"/>
</dbReference>
<dbReference type="GO" id="GO:0008837">
    <property type="term" value="F:diaminopimelate epimerase activity"/>
    <property type="evidence" value="ECO:0000318"/>
    <property type="project" value="GO_Central"/>
</dbReference>
<dbReference type="GO" id="GO:0009089">
    <property type="term" value="P:lysine biosynthetic process via diaminopimelate"/>
    <property type="evidence" value="ECO:0000318"/>
    <property type="project" value="GO_Central"/>
</dbReference>
<dbReference type="Gene3D" id="3.10.310.10">
    <property type="entry name" value="Diaminopimelate Epimerase, Chain A, domain 1"/>
    <property type="match status" value="2"/>
</dbReference>
<dbReference type="HAMAP" id="MF_00197">
    <property type="entry name" value="DAP_epimerase"/>
    <property type="match status" value="1"/>
</dbReference>
<dbReference type="InterPro" id="IPR018510">
    <property type="entry name" value="DAP_epimerase_AS"/>
</dbReference>
<dbReference type="InterPro" id="IPR001653">
    <property type="entry name" value="DAP_epimerase_DapF"/>
</dbReference>
<dbReference type="NCBIfam" id="TIGR00652">
    <property type="entry name" value="DapF"/>
    <property type="match status" value="1"/>
</dbReference>
<dbReference type="PANTHER" id="PTHR31689:SF0">
    <property type="entry name" value="DIAMINOPIMELATE EPIMERASE"/>
    <property type="match status" value="1"/>
</dbReference>
<dbReference type="PANTHER" id="PTHR31689">
    <property type="entry name" value="DIAMINOPIMELATE EPIMERASE, CHLOROPLASTIC"/>
    <property type="match status" value="1"/>
</dbReference>
<dbReference type="Pfam" id="PF01678">
    <property type="entry name" value="DAP_epimerase"/>
    <property type="match status" value="2"/>
</dbReference>
<dbReference type="SUPFAM" id="SSF54506">
    <property type="entry name" value="Diaminopimelate epimerase-like"/>
    <property type="match status" value="2"/>
</dbReference>
<dbReference type="PROSITE" id="PS01326">
    <property type="entry name" value="DAP_EPIMERASE"/>
    <property type="match status" value="1"/>
</dbReference>
<reference key="1">
    <citation type="journal article" date="1999" name="Nature">
        <title>Evidence for lateral gene transfer between Archaea and Bacteria from genome sequence of Thermotoga maritima.</title>
        <authorList>
            <person name="Nelson K.E."/>
            <person name="Clayton R.A."/>
            <person name="Gill S.R."/>
            <person name="Gwinn M.L."/>
            <person name="Dodson R.J."/>
            <person name="Haft D.H."/>
            <person name="Hickey E.K."/>
            <person name="Peterson J.D."/>
            <person name="Nelson W.C."/>
            <person name="Ketchum K.A."/>
            <person name="McDonald L.A."/>
            <person name="Utterback T.R."/>
            <person name="Malek J.A."/>
            <person name="Linher K.D."/>
            <person name="Garrett M.M."/>
            <person name="Stewart A.M."/>
            <person name="Cotton M.D."/>
            <person name="Pratt M.S."/>
            <person name="Phillips C.A."/>
            <person name="Richardson D.L."/>
            <person name="Heidelberg J.F."/>
            <person name="Sutton G.G."/>
            <person name="Fleischmann R.D."/>
            <person name="Eisen J.A."/>
            <person name="White O."/>
            <person name="Salzberg S.L."/>
            <person name="Smith H.O."/>
            <person name="Venter J.C."/>
            <person name="Fraser C.M."/>
        </authorList>
    </citation>
    <scope>NUCLEOTIDE SEQUENCE [LARGE SCALE GENOMIC DNA]</scope>
    <source>
        <strain>ATCC 43589 / DSM 3109 / JCM 10099 / NBRC 100826 / MSB8</strain>
    </source>
</reference>
<reference key="2">
    <citation type="journal article" date="2019" name="FEBS J.">
        <title>Elucidation of the D-lysine biosynthetic pathway in the hyperthermophile Thermotoga maritima.</title>
        <authorList>
            <person name="Miyamoto T."/>
            <person name="Katane M."/>
            <person name="Saitoh Y."/>
            <person name="Sekine M."/>
            <person name="Homma H."/>
        </authorList>
    </citation>
    <scope>FUNCTION</scope>
    <scope>CATALYTIC ACTIVITY</scope>
    <scope>BIOPHYSICOCHEMICAL PROPERTIES</scope>
    <scope>PATHWAY</scope>
    <scope>SUBUNIT</scope>
    <source>
        <strain>ATCC 43589 / DSM 3109 / JCM 10099 / NBRC 100826 / MSB8</strain>
    </source>
</reference>
<evidence type="ECO:0000255" key="1">
    <source>
        <dbReference type="HAMAP-Rule" id="MF_00197"/>
    </source>
</evidence>
<evidence type="ECO:0000269" key="2">
    <source>
    </source>
</evidence>
<evidence type="ECO:0000303" key="3">
    <source>
    </source>
</evidence>
<evidence type="ECO:0000305" key="4">
    <source>
    </source>
</evidence>
<evidence type="ECO:0000312" key="5">
    <source>
        <dbReference type="EMBL" id="AAD36589.1"/>
    </source>
</evidence>
<comment type="function">
    <text evidence="2">Catalyzes the stereoinversion of LL-2,6-diaminopimelate (L,L-DAP) to meso-diaminopimelate (meso-DAP), a precursor of L-lysine and an essential component of the bacterial peptidoglycan (PubMed:30548096). Also catalyzes the racemization of certain amino acids, including Lys, with low efficiency (PubMed:30548096).</text>
</comment>
<comment type="catalytic activity">
    <reaction evidence="1 2">
        <text>(2S,6S)-2,6-diaminopimelate = meso-2,6-diaminopimelate</text>
        <dbReference type="Rhea" id="RHEA:15393"/>
        <dbReference type="ChEBI" id="CHEBI:57609"/>
        <dbReference type="ChEBI" id="CHEBI:57791"/>
        <dbReference type="EC" id="5.1.1.7"/>
    </reaction>
</comment>
<comment type="biophysicochemical properties">
    <kinetics>
        <KM evidence="2">0.082 mM for L,L-DAP</KM>
        <KM evidence="2">0.258 mM for meso-DAP</KM>
        <KM evidence="2">594 mM for L-Lys</KM>
        <KM evidence="2">619 mM for D-Lys</KM>
        <Vmax evidence="2">1.87 umol/sec/mg enzyme with L,L-DAP as substrate</Vmax>
        <Vmax evidence="2">2.63 umol/sec/mg enzyme with meso-DAP as substrate</Vmax>
        <Vmax evidence="2">0.34 umol/sec/mg enzyme with L-Lys as substrate</Vmax>
        <Vmax evidence="2">0.37 umol/sec/mg enzyme with D-Lys as substrate</Vmax>
        <text evidence="2">kcat is 56.2 sec(-1) with L,L-DAP as substrate. kcat is 79.1 sec(-1) with meso-DAP as substrate. kcat is 10.1 sec(-1) with L-Lys as substrate. kcat is 11.2 sec(-1) with D-Lys as substrate.</text>
    </kinetics>
    <phDependence>
        <text evidence="2">Optimum pH is 7.5-8.0.</text>
    </phDependence>
    <temperatureDependence>
        <text evidence="2">Optimum temperature is 90 degrees Celsius.</text>
    </temperatureDependence>
</comment>
<comment type="pathway">
    <text evidence="1 4">Amino-acid biosynthesis; L-lysine biosynthesis via DAP pathway; DL-2,6-diaminopimelate from LL-2,6-diaminopimelate: step 1/1.</text>
</comment>
<comment type="subunit">
    <text evidence="2">Probably forms homotrimers.</text>
</comment>
<comment type="subcellular location">
    <subcellularLocation>
        <location evidence="1">Cytoplasm</location>
    </subcellularLocation>
</comment>
<comment type="similarity">
    <text evidence="1">Belongs to the diaminopimelate epimerase family.</text>
</comment>
<gene>
    <name evidence="1" type="primary">dapF</name>
    <name evidence="5" type="ordered locus">TM_1522</name>
</gene>
<proteinExistence type="evidence at protein level"/>
<organism>
    <name type="scientific">Thermotoga maritima (strain ATCC 43589 / DSM 3109 / JCM 10099 / NBRC 100826 / MSB8)</name>
    <dbReference type="NCBI Taxonomy" id="243274"/>
    <lineage>
        <taxon>Bacteria</taxon>
        <taxon>Thermotogati</taxon>
        <taxon>Thermotogota</taxon>
        <taxon>Thermotogae</taxon>
        <taxon>Thermotogales</taxon>
        <taxon>Thermotogaceae</taxon>
        <taxon>Thermotoga</taxon>
    </lineage>
</organism>